<name>DNLJ_STRP2</name>
<evidence type="ECO:0000255" key="1">
    <source>
        <dbReference type="HAMAP-Rule" id="MF_01588"/>
    </source>
</evidence>
<feature type="chain" id="PRO_0000313456" description="DNA ligase">
    <location>
        <begin position="1"/>
        <end position="652"/>
    </location>
</feature>
<feature type="domain" description="BRCT" evidence="1">
    <location>
        <begin position="577"/>
        <end position="652"/>
    </location>
</feature>
<feature type="active site" description="N6-AMP-lysine intermediate" evidence="1">
    <location>
        <position position="109"/>
    </location>
</feature>
<feature type="binding site" evidence="1">
    <location>
        <begin position="29"/>
        <end position="33"/>
    </location>
    <ligand>
        <name>NAD(+)</name>
        <dbReference type="ChEBI" id="CHEBI:57540"/>
    </ligand>
</feature>
<feature type="binding site" evidence="1">
    <location>
        <begin position="78"/>
        <end position="79"/>
    </location>
    <ligand>
        <name>NAD(+)</name>
        <dbReference type="ChEBI" id="CHEBI:57540"/>
    </ligand>
</feature>
<feature type="binding site" evidence="1">
    <location>
        <position position="107"/>
    </location>
    <ligand>
        <name>NAD(+)</name>
        <dbReference type="ChEBI" id="CHEBI:57540"/>
    </ligand>
</feature>
<feature type="binding site" evidence="1">
    <location>
        <position position="130"/>
    </location>
    <ligand>
        <name>NAD(+)</name>
        <dbReference type="ChEBI" id="CHEBI:57540"/>
    </ligand>
</feature>
<feature type="binding site" evidence="1">
    <location>
        <position position="164"/>
    </location>
    <ligand>
        <name>NAD(+)</name>
        <dbReference type="ChEBI" id="CHEBI:57540"/>
    </ligand>
</feature>
<feature type="binding site" evidence="1">
    <location>
        <position position="278"/>
    </location>
    <ligand>
        <name>NAD(+)</name>
        <dbReference type="ChEBI" id="CHEBI:57540"/>
    </ligand>
</feature>
<feature type="binding site" evidence="1">
    <location>
        <position position="302"/>
    </location>
    <ligand>
        <name>NAD(+)</name>
        <dbReference type="ChEBI" id="CHEBI:57540"/>
    </ligand>
</feature>
<feature type="binding site" evidence="1">
    <location>
        <position position="395"/>
    </location>
    <ligand>
        <name>Zn(2+)</name>
        <dbReference type="ChEBI" id="CHEBI:29105"/>
    </ligand>
</feature>
<feature type="binding site" evidence="1">
    <location>
        <position position="398"/>
    </location>
    <ligand>
        <name>Zn(2+)</name>
        <dbReference type="ChEBI" id="CHEBI:29105"/>
    </ligand>
</feature>
<feature type="binding site" evidence="1">
    <location>
        <position position="413"/>
    </location>
    <ligand>
        <name>Zn(2+)</name>
        <dbReference type="ChEBI" id="CHEBI:29105"/>
    </ligand>
</feature>
<feature type="binding site" evidence="1">
    <location>
        <position position="418"/>
    </location>
    <ligand>
        <name>Zn(2+)</name>
        <dbReference type="ChEBI" id="CHEBI:29105"/>
    </ligand>
</feature>
<protein>
    <recommendedName>
        <fullName evidence="1">DNA ligase</fullName>
        <ecNumber evidence="1">6.5.1.2</ecNumber>
    </recommendedName>
    <alternativeName>
        <fullName evidence="1">Polydeoxyribonucleotide synthase [NAD(+)]</fullName>
    </alternativeName>
</protein>
<organism>
    <name type="scientific">Streptococcus pneumoniae serotype 2 (strain D39 / NCTC 7466)</name>
    <dbReference type="NCBI Taxonomy" id="373153"/>
    <lineage>
        <taxon>Bacteria</taxon>
        <taxon>Bacillati</taxon>
        <taxon>Bacillota</taxon>
        <taxon>Bacilli</taxon>
        <taxon>Lactobacillales</taxon>
        <taxon>Streptococcaceae</taxon>
        <taxon>Streptococcus</taxon>
    </lineage>
</organism>
<accession>Q04KH2</accession>
<gene>
    <name evidence="1" type="primary">ligA</name>
    <name type="ordered locus">SPD_1001</name>
</gene>
<dbReference type="EC" id="6.5.1.2" evidence="1"/>
<dbReference type="EMBL" id="CP000410">
    <property type="protein sequence ID" value="ABJ54766.1"/>
    <property type="molecule type" value="Genomic_DNA"/>
</dbReference>
<dbReference type="RefSeq" id="WP_001042588.1">
    <property type="nucleotide sequence ID" value="NZ_JAMLJR010000014.1"/>
</dbReference>
<dbReference type="SMR" id="Q04KH2"/>
<dbReference type="PaxDb" id="373153-SPD_1001"/>
<dbReference type="KEGG" id="spd:SPD_1001"/>
<dbReference type="eggNOG" id="COG0272">
    <property type="taxonomic scope" value="Bacteria"/>
</dbReference>
<dbReference type="HOGENOM" id="CLU_007764_2_1_9"/>
<dbReference type="BioCyc" id="SPNE373153:G1G6V-1090-MONOMER"/>
<dbReference type="Proteomes" id="UP000001452">
    <property type="component" value="Chromosome"/>
</dbReference>
<dbReference type="GO" id="GO:0005829">
    <property type="term" value="C:cytosol"/>
    <property type="evidence" value="ECO:0007669"/>
    <property type="project" value="TreeGrafter"/>
</dbReference>
<dbReference type="GO" id="GO:0003677">
    <property type="term" value="F:DNA binding"/>
    <property type="evidence" value="ECO:0007669"/>
    <property type="project" value="InterPro"/>
</dbReference>
<dbReference type="GO" id="GO:0003911">
    <property type="term" value="F:DNA ligase (NAD+) activity"/>
    <property type="evidence" value="ECO:0007669"/>
    <property type="project" value="UniProtKB-UniRule"/>
</dbReference>
<dbReference type="GO" id="GO:0046872">
    <property type="term" value="F:metal ion binding"/>
    <property type="evidence" value="ECO:0007669"/>
    <property type="project" value="UniProtKB-KW"/>
</dbReference>
<dbReference type="GO" id="GO:0006281">
    <property type="term" value="P:DNA repair"/>
    <property type="evidence" value="ECO:0007669"/>
    <property type="project" value="UniProtKB-KW"/>
</dbReference>
<dbReference type="GO" id="GO:0006260">
    <property type="term" value="P:DNA replication"/>
    <property type="evidence" value="ECO:0007669"/>
    <property type="project" value="UniProtKB-KW"/>
</dbReference>
<dbReference type="CDD" id="cd17748">
    <property type="entry name" value="BRCT_DNA_ligase_like"/>
    <property type="match status" value="1"/>
</dbReference>
<dbReference type="CDD" id="cd00114">
    <property type="entry name" value="LIGANc"/>
    <property type="match status" value="1"/>
</dbReference>
<dbReference type="FunFam" id="1.10.150.20:FF:000006">
    <property type="entry name" value="DNA ligase"/>
    <property type="match status" value="1"/>
</dbReference>
<dbReference type="FunFam" id="1.10.150.20:FF:000007">
    <property type="entry name" value="DNA ligase"/>
    <property type="match status" value="1"/>
</dbReference>
<dbReference type="FunFam" id="1.10.287.610:FF:000002">
    <property type="entry name" value="DNA ligase"/>
    <property type="match status" value="1"/>
</dbReference>
<dbReference type="FunFam" id="2.40.50.140:FF:000012">
    <property type="entry name" value="DNA ligase"/>
    <property type="match status" value="1"/>
</dbReference>
<dbReference type="FunFam" id="3.30.470.30:FF:000001">
    <property type="entry name" value="DNA ligase"/>
    <property type="match status" value="1"/>
</dbReference>
<dbReference type="FunFam" id="3.40.50.10190:FF:000045">
    <property type="entry name" value="DNA ligase"/>
    <property type="match status" value="1"/>
</dbReference>
<dbReference type="Gene3D" id="6.20.10.30">
    <property type="match status" value="1"/>
</dbReference>
<dbReference type="Gene3D" id="1.10.150.20">
    <property type="entry name" value="5' to 3' exonuclease, C-terminal subdomain"/>
    <property type="match status" value="2"/>
</dbReference>
<dbReference type="Gene3D" id="3.40.50.10190">
    <property type="entry name" value="BRCT domain"/>
    <property type="match status" value="1"/>
</dbReference>
<dbReference type="Gene3D" id="3.30.470.30">
    <property type="entry name" value="DNA ligase/mRNA capping enzyme"/>
    <property type="match status" value="1"/>
</dbReference>
<dbReference type="Gene3D" id="1.10.287.610">
    <property type="entry name" value="Helix hairpin bin"/>
    <property type="match status" value="1"/>
</dbReference>
<dbReference type="Gene3D" id="2.40.50.140">
    <property type="entry name" value="Nucleic acid-binding proteins"/>
    <property type="match status" value="1"/>
</dbReference>
<dbReference type="HAMAP" id="MF_01588">
    <property type="entry name" value="DNA_ligase_A"/>
    <property type="match status" value="1"/>
</dbReference>
<dbReference type="InterPro" id="IPR001357">
    <property type="entry name" value="BRCT_dom"/>
</dbReference>
<dbReference type="InterPro" id="IPR036420">
    <property type="entry name" value="BRCT_dom_sf"/>
</dbReference>
<dbReference type="InterPro" id="IPR041663">
    <property type="entry name" value="DisA/LigA_HHH"/>
</dbReference>
<dbReference type="InterPro" id="IPR001679">
    <property type="entry name" value="DNA_ligase"/>
</dbReference>
<dbReference type="InterPro" id="IPR018239">
    <property type="entry name" value="DNA_ligase_AS"/>
</dbReference>
<dbReference type="InterPro" id="IPR033136">
    <property type="entry name" value="DNA_ligase_CS"/>
</dbReference>
<dbReference type="InterPro" id="IPR013839">
    <property type="entry name" value="DNAligase_adenylation"/>
</dbReference>
<dbReference type="InterPro" id="IPR013840">
    <property type="entry name" value="DNAligase_N"/>
</dbReference>
<dbReference type="InterPro" id="IPR003583">
    <property type="entry name" value="Hlx-hairpin-Hlx_DNA-bd_motif"/>
</dbReference>
<dbReference type="InterPro" id="IPR012340">
    <property type="entry name" value="NA-bd_OB-fold"/>
</dbReference>
<dbReference type="InterPro" id="IPR004150">
    <property type="entry name" value="NAD_DNA_ligase_OB"/>
</dbReference>
<dbReference type="InterPro" id="IPR010994">
    <property type="entry name" value="RuvA_2-like"/>
</dbReference>
<dbReference type="InterPro" id="IPR004149">
    <property type="entry name" value="Znf_DNAligase_C4"/>
</dbReference>
<dbReference type="NCBIfam" id="TIGR00575">
    <property type="entry name" value="dnlj"/>
    <property type="match status" value="1"/>
</dbReference>
<dbReference type="NCBIfam" id="NF005932">
    <property type="entry name" value="PRK07956.1"/>
    <property type="match status" value="1"/>
</dbReference>
<dbReference type="PANTHER" id="PTHR23389">
    <property type="entry name" value="CHROMOSOME TRANSMISSION FIDELITY FACTOR 18"/>
    <property type="match status" value="1"/>
</dbReference>
<dbReference type="PANTHER" id="PTHR23389:SF9">
    <property type="entry name" value="DNA LIGASE"/>
    <property type="match status" value="1"/>
</dbReference>
<dbReference type="Pfam" id="PF00533">
    <property type="entry name" value="BRCT"/>
    <property type="match status" value="1"/>
</dbReference>
<dbReference type="Pfam" id="PF01653">
    <property type="entry name" value="DNA_ligase_aden"/>
    <property type="match status" value="1"/>
</dbReference>
<dbReference type="Pfam" id="PF03120">
    <property type="entry name" value="DNA_ligase_OB"/>
    <property type="match status" value="1"/>
</dbReference>
<dbReference type="Pfam" id="PF03119">
    <property type="entry name" value="DNA_ligase_ZBD"/>
    <property type="match status" value="1"/>
</dbReference>
<dbReference type="Pfam" id="PF12826">
    <property type="entry name" value="HHH_2"/>
    <property type="match status" value="1"/>
</dbReference>
<dbReference type="Pfam" id="PF14520">
    <property type="entry name" value="HHH_5"/>
    <property type="match status" value="1"/>
</dbReference>
<dbReference type="PIRSF" id="PIRSF001604">
    <property type="entry name" value="LigA"/>
    <property type="match status" value="1"/>
</dbReference>
<dbReference type="SMART" id="SM00292">
    <property type="entry name" value="BRCT"/>
    <property type="match status" value="1"/>
</dbReference>
<dbReference type="SMART" id="SM00278">
    <property type="entry name" value="HhH1"/>
    <property type="match status" value="2"/>
</dbReference>
<dbReference type="SMART" id="SM00532">
    <property type="entry name" value="LIGANc"/>
    <property type="match status" value="1"/>
</dbReference>
<dbReference type="SUPFAM" id="SSF52113">
    <property type="entry name" value="BRCT domain"/>
    <property type="match status" value="1"/>
</dbReference>
<dbReference type="SUPFAM" id="SSF56091">
    <property type="entry name" value="DNA ligase/mRNA capping enzyme, catalytic domain"/>
    <property type="match status" value="1"/>
</dbReference>
<dbReference type="SUPFAM" id="SSF50249">
    <property type="entry name" value="Nucleic acid-binding proteins"/>
    <property type="match status" value="1"/>
</dbReference>
<dbReference type="SUPFAM" id="SSF47781">
    <property type="entry name" value="RuvA domain 2-like"/>
    <property type="match status" value="1"/>
</dbReference>
<dbReference type="PROSITE" id="PS50172">
    <property type="entry name" value="BRCT"/>
    <property type="match status" value="1"/>
</dbReference>
<dbReference type="PROSITE" id="PS01055">
    <property type="entry name" value="DNA_LIGASE_N1"/>
    <property type="match status" value="1"/>
</dbReference>
<dbReference type="PROSITE" id="PS01056">
    <property type="entry name" value="DNA_LIGASE_N2"/>
    <property type="match status" value="1"/>
</dbReference>
<sequence>MNKRMNELVALLNRYATEYYTSDNPSVSDSEYDRLYRELVELETAYPEQVLADSPTHRVGGKVLDGFEKYSHQYPLYSLQDAFSREELDAFDARVRKEVAHPTYICELKIDGLSISLTYEKGILVAGVTRGDGSIGENITENLKRVKDIPLTLPEELDITVRGECYMPRASFDQVNQARQENGEPEFANPRNAAAGTLRQLDTAVVAKRNLATFLYQEASPSTRDSQEKGLKYLEQLGFVVNPKRILAENIDEIWNFIQEVGQERENLPYDIDGVVIKVNDLASQEELGFTVKAPKWAVAYKFPAEEKEAQLLSVDWTVGRTGVVTPTANLTPVQLAGTTVSRATLHNVDYIAEKDIRKDDTVIVYKAGDIIPAVLRVVESKRVSEEKLDIPTNCPSCNSDLLHFEDEVALRCINPRCPAQIMEGLIHFASRDAMNITGLGPSIVEKLFAANLVKDVADIYRLQEEDFLLLEGVKEKSAAKLYQAIQASKENSAEKLLFGLGIRHVGSKASQLLLQYFHSIENLYQADSEEVASIESLGGVIAKSLQTYFAAEGSEILLRELKETGVNLDYKGQTVVADAALSGLTVVLTGKLERLKRSEAKSKLESLGAKVTGSVSKKTDLVVVGADAGSKLQKAQELGIQVRDEAWLESL</sequence>
<proteinExistence type="inferred from homology"/>
<keyword id="KW-0227">DNA damage</keyword>
<keyword id="KW-0234">DNA repair</keyword>
<keyword id="KW-0235">DNA replication</keyword>
<keyword id="KW-0436">Ligase</keyword>
<keyword id="KW-0460">Magnesium</keyword>
<keyword id="KW-0464">Manganese</keyword>
<keyword id="KW-0479">Metal-binding</keyword>
<keyword id="KW-0520">NAD</keyword>
<keyword id="KW-1185">Reference proteome</keyword>
<keyword id="KW-0862">Zinc</keyword>
<comment type="function">
    <text evidence="1">DNA ligase that catalyzes the formation of phosphodiester linkages between 5'-phosphoryl and 3'-hydroxyl groups in double-stranded DNA using NAD as a coenzyme and as the energy source for the reaction. It is essential for DNA replication and repair of damaged DNA.</text>
</comment>
<comment type="catalytic activity">
    <reaction evidence="1">
        <text>NAD(+) + (deoxyribonucleotide)n-3'-hydroxyl + 5'-phospho-(deoxyribonucleotide)m = (deoxyribonucleotide)n+m + AMP + beta-nicotinamide D-nucleotide.</text>
        <dbReference type="EC" id="6.5.1.2"/>
    </reaction>
</comment>
<comment type="cofactor">
    <cofactor evidence="1">
        <name>Mg(2+)</name>
        <dbReference type="ChEBI" id="CHEBI:18420"/>
    </cofactor>
    <cofactor evidence="1">
        <name>Mn(2+)</name>
        <dbReference type="ChEBI" id="CHEBI:29035"/>
    </cofactor>
</comment>
<comment type="similarity">
    <text evidence="1">Belongs to the NAD-dependent DNA ligase family. LigA subfamily.</text>
</comment>
<reference key="1">
    <citation type="journal article" date="2007" name="J. Bacteriol.">
        <title>Genome sequence of Avery's virulent serotype 2 strain D39 of Streptococcus pneumoniae and comparison with that of unencapsulated laboratory strain R6.</title>
        <authorList>
            <person name="Lanie J.A."/>
            <person name="Ng W.-L."/>
            <person name="Kazmierczak K.M."/>
            <person name="Andrzejewski T.M."/>
            <person name="Davidsen T.M."/>
            <person name="Wayne K.J."/>
            <person name="Tettelin H."/>
            <person name="Glass J.I."/>
            <person name="Winkler M.E."/>
        </authorList>
    </citation>
    <scope>NUCLEOTIDE SEQUENCE [LARGE SCALE GENOMIC DNA]</scope>
    <source>
        <strain>D39 / NCTC 7466</strain>
    </source>
</reference>